<proteinExistence type="inferred from homology"/>
<sequence length="252" mass="28866">MKFSDPHLLPAGLERSLRFYVTNPSPCPYLPDRKERKAFTNLAIPEADALHNVLSQSGFRRSQSIAYRPACTRCNACKSVRVATREYDISRNDRRVIARNAHLVRRPVAAQATREQFRLLKSYVVTRHDNGGMSDMTYRDYVAMVGGSPVQSLIFEYRDGPEPDAPLVAAAITDVLRDGLSMVYTFFDPAKTSQSLGHYLILDHIRHAHDLGLPHLYLGYWVKGSPKMDYKRRYKPLEVLDGDRWRPLRDDE</sequence>
<organism>
    <name type="scientific">Hyphomonas neptunium (strain ATCC 15444)</name>
    <dbReference type="NCBI Taxonomy" id="228405"/>
    <lineage>
        <taxon>Bacteria</taxon>
        <taxon>Pseudomonadati</taxon>
        <taxon>Pseudomonadota</taxon>
        <taxon>Alphaproteobacteria</taxon>
        <taxon>Hyphomonadales</taxon>
        <taxon>Hyphomonadaceae</taxon>
        <taxon>Hyphomonas</taxon>
    </lineage>
</organism>
<feature type="chain" id="PRO_0000263188" description="Aspartate/glutamate leucyltransferase">
    <location>
        <begin position="1"/>
        <end position="252"/>
    </location>
</feature>
<dbReference type="EC" id="2.3.2.29" evidence="1"/>
<dbReference type="EMBL" id="CP000158">
    <property type="protein sequence ID" value="ABI78290.1"/>
    <property type="molecule type" value="Genomic_DNA"/>
</dbReference>
<dbReference type="RefSeq" id="WP_011645920.1">
    <property type="nucleotide sequence ID" value="NC_008358.1"/>
</dbReference>
<dbReference type="SMR" id="Q0C3S3"/>
<dbReference type="STRING" id="228405.HNE_0893"/>
<dbReference type="KEGG" id="hne:HNE_0893"/>
<dbReference type="eggNOG" id="COG2935">
    <property type="taxonomic scope" value="Bacteria"/>
</dbReference>
<dbReference type="HOGENOM" id="CLU_077607_1_0_5"/>
<dbReference type="Proteomes" id="UP000001959">
    <property type="component" value="Chromosome"/>
</dbReference>
<dbReference type="GO" id="GO:0005737">
    <property type="term" value="C:cytoplasm"/>
    <property type="evidence" value="ECO:0007669"/>
    <property type="project" value="UniProtKB-SubCell"/>
</dbReference>
<dbReference type="GO" id="GO:0004057">
    <property type="term" value="F:arginyl-tRNA--protein transferase activity"/>
    <property type="evidence" value="ECO:0007669"/>
    <property type="project" value="InterPro"/>
</dbReference>
<dbReference type="GO" id="GO:0008914">
    <property type="term" value="F:leucyl-tRNA--protein transferase activity"/>
    <property type="evidence" value="ECO:0007669"/>
    <property type="project" value="UniProtKB-UniRule"/>
</dbReference>
<dbReference type="GO" id="GO:0071596">
    <property type="term" value="P:ubiquitin-dependent protein catabolic process via the N-end rule pathway"/>
    <property type="evidence" value="ECO:0007669"/>
    <property type="project" value="InterPro"/>
</dbReference>
<dbReference type="HAMAP" id="MF_00689">
    <property type="entry name" value="Bpt"/>
    <property type="match status" value="1"/>
</dbReference>
<dbReference type="InterPro" id="IPR016181">
    <property type="entry name" value="Acyl_CoA_acyltransferase"/>
</dbReference>
<dbReference type="InterPro" id="IPR017138">
    <property type="entry name" value="Asp_Glu_LeuTrfase"/>
</dbReference>
<dbReference type="InterPro" id="IPR030700">
    <property type="entry name" value="N-end_Aminoacyl_Trfase"/>
</dbReference>
<dbReference type="InterPro" id="IPR007472">
    <property type="entry name" value="N-end_Aminoacyl_Trfase_C"/>
</dbReference>
<dbReference type="InterPro" id="IPR007471">
    <property type="entry name" value="N-end_Aminoacyl_Trfase_N"/>
</dbReference>
<dbReference type="NCBIfam" id="NF002342">
    <property type="entry name" value="PRK01305.1-3"/>
    <property type="match status" value="1"/>
</dbReference>
<dbReference type="NCBIfam" id="NF002343">
    <property type="entry name" value="PRK01305.1-4"/>
    <property type="match status" value="1"/>
</dbReference>
<dbReference type="NCBIfam" id="NF002346">
    <property type="entry name" value="PRK01305.2-3"/>
    <property type="match status" value="1"/>
</dbReference>
<dbReference type="PANTHER" id="PTHR21367">
    <property type="entry name" value="ARGININE-TRNA-PROTEIN TRANSFERASE 1"/>
    <property type="match status" value="1"/>
</dbReference>
<dbReference type="PANTHER" id="PTHR21367:SF1">
    <property type="entry name" value="ARGINYL-TRNA--PROTEIN TRANSFERASE 1"/>
    <property type="match status" value="1"/>
</dbReference>
<dbReference type="Pfam" id="PF04377">
    <property type="entry name" value="ATE_C"/>
    <property type="match status" value="1"/>
</dbReference>
<dbReference type="Pfam" id="PF04376">
    <property type="entry name" value="ATE_N"/>
    <property type="match status" value="1"/>
</dbReference>
<dbReference type="PIRSF" id="PIRSF037208">
    <property type="entry name" value="ATE_pro_prd"/>
    <property type="match status" value="1"/>
</dbReference>
<dbReference type="SUPFAM" id="SSF55729">
    <property type="entry name" value="Acyl-CoA N-acyltransferases (Nat)"/>
    <property type="match status" value="1"/>
</dbReference>
<protein>
    <recommendedName>
        <fullName evidence="1">Aspartate/glutamate leucyltransferase</fullName>
        <ecNumber evidence="1">2.3.2.29</ecNumber>
    </recommendedName>
</protein>
<reference key="1">
    <citation type="journal article" date="2006" name="J. Bacteriol.">
        <title>Comparative genomic evidence for a close relationship between the dimorphic prosthecate bacteria Hyphomonas neptunium and Caulobacter crescentus.</title>
        <authorList>
            <person name="Badger J.H."/>
            <person name="Hoover T.R."/>
            <person name="Brun Y.V."/>
            <person name="Weiner R.M."/>
            <person name="Laub M.T."/>
            <person name="Alexandre G."/>
            <person name="Mrazek J."/>
            <person name="Ren Q."/>
            <person name="Paulsen I.T."/>
            <person name="Nelson K.E."/>
            <person name="Khouri H.M."/>
            <person name="Radune D."/>
            <person name="Sosa J."/>
            <person name="Dodson R.J."/>
            <person name="Sullivan S.A."/>
            <person name="Rosovitz M.J."/>
            <person name="Madupu R."/>
            <person name="Brinkac L.M."/>
            <person name="Durkin A.S."/>
            <person name="Daugherty S.C."/>
            <person name="Kothari S.P."/>
            <person name="Giglio M.G."/>
            <person name="Zhou L."/>
            <person name="Haft D.H."/>
            <person name="Selengut J.D."/>
            <person name="Davidsen T.M."/>
            <person name="Yang Q."/>
            <person name="Zafar N."/>
            <person name="Ward N.L."/>
        </authorList>
    </citation>
    <scope>NUCLEOTIDE SEQUENCE [LARGE SCALE GENOMIC DNA]</scope>
    <source>
        <strain>ATCC 15444</strain>
    </source>
</reference>
<comment type="function">
    <text evidence="1">Functions in the N-end rule pathway of protein degradation where it conjugates Leu from its aminoacyl-tRNA to the N-termini of proteins containing an N-terminal aspartate or glutamate.</text>
</comment>
<comment type="catalytic activity">
    <reaction evidence="1">
        <text>N-terminal L-glutamyl-[protein] + L-leucyl-tRNA(Leu) = N-terminal L-leucyl-L-glutamyl-[protein] + tRNA(Leu) + H(+)</text>
        <dbReference type="Rhea" id="RHEA:50412"/>
        <dbReference type="Rhea" id="RHEA-COMP:9613"/>
        <dbReference type="Rhea" id="RHEA-COMP:9622"/>
        <dbReference type="Rhea" id="RHEA-COMP:12664"/>
        <dbReference type="Rhea" id="RHEA-COMP:12668"/>
        <dbReference type="ChEBI" id="CHEBI:15378"/>
        <dbReference type="ChEBI" id="CHEBI:64721"/>
        <dbReference type="ChEBI" id="CHEBI:78442"/>
        <dbReference type="ChEBI" id="CHEBI:78494"/>
        <dbReference type="ChEBI" id="CHEBI:133041"/>
        <dbReference type="EC" id="2.3.2.29"/>
    </reaction>
</comment>
<comment type="catalytic activity">
    <reaction evidence="1">
        <text>N-terminal L-aspartyl-[protein] + L-leucyl-tRNA(Leu) = N-terminal L-leucyl-L-aspartyl-[protein] + tRNA(Leu) + H(+)</text>
        <dbReference type="Rhea" id="RHEA:50420"/>
        <dbReference type="Rhea" id="RHEA-COMP:9613"/>
        <dbReference type="Rhea" id="RHEA-COMP:9622"/>
        <dbReference type="Rhea" id="RHEA-COMP:12669"/>
        <dbReference type="Rhea" id="RHEA-COMP:12674"/>
        <dbReference type="ChEBI" id="CHEBI:15378"/>
        <dbReference type="ChEBI" id="CHEBI:64720"/>
        <dbReference type="ChEBI" id="CHEBI:78442"/>
        <dbReference type="ChEBI" id="CHEBI:78494"/>
        <dbReference type="ChEBI" id="CHEBI:133042"/>
        <dbReference type="EC" id="2.3.2.29"/>
    </reaction>
</comment>
<comment type="subcellular location">
    <subcellularLocation>
        <location evidence="1">Cytoplasm</location>
    </subcellularLocation>
</comment>
<comment type="similarity">
    <text evidence="1">Belongs to the R-transferase family. Bpt subfamily.</text>
</comment>
<keyword id="KW-0012">Acyltransferase</keyword>
<keyword id="KW-0963">Cytoplasm</keyword>
<keyword id="KW-1185">Reference proteome</keyword>
<keyword id="KW-0808">Transferase</keyword>
<accession>Q0C3S3</accession>
<gene>
    <name evidence="1" type="primary">bpt</name>
    <name type="ordered locus">HNE_0893</name>
</gene>
<evidence type="ECO:0000255" key="1">
    <source>
        <dbReference type="HAMAP-Rule" id="MF_00689"/>
    </source>
</evidence>
<name>BPT_HYPNA</name>